<organism>
    <name type="scientific">Phyllocrania paradoxa</name>
    <name type="common">Ghost praying mantis</name>
    <dbReference type="NCBI Taxonomy" id="267208"/>
    <lineage>
        <taxon>Eukaryota</taxon>
        <taxon>Metazoa</taxon>
        <taxon>Ecdysozoa</taxon>
        <taxon>Arthropoda</taxon>
        <taxon>Hexapoda</taxon>
        <taxon>Insecta</taxon>
        <taxon>Pterygota</taxon>
        <taxon>Neoptera</taxon>
        <taxon>Polyneoptera</taxon>
        <taxon>Dictyoptera</taxon>
        <taxon>Mantodea</taxon>
        <taxon>Eumantodea</taxon>
        <taxon>Hymenopoidea</taxon>
        <taxon>Hymenopodidae</taxon>
        <taxon>Phyllocraniinae</taxon>
        <taxon>Phyllocrania</taxon>
    </lineage>
</organism>
<comment type="function">
    <text evidence="1">Mediates visceral muscle contractile activity (myotropic activity).</text>
</comment>
<comment type="subcellular location">
    <subcellularLocation>
        <location evidence="2">Secreted</location>
    </subcellularLocation>
</comment>
<comment type="mass spectrometry"/>
<comment type="mass spectrometry">
    <text>With pyroglutamate at Gln-1.</text>
</comment>
<comment type="similarity">
    <text evidence="3">Belongs to the periviscerokinin family.</text>
</comment>
<reference evidence="6" key="1">
    <citation type="journal article" date="2010" name="Peptides">
        <title>CAPA-peptides of praying mantids (Mantodea).</title>
        <authorList>
            <person name="Koehler R."/>
            <person name="Predel R."/>
        </authorList>
    </citation>
    <scope>PROTEIN SEQUENCE</scope>
    <scope>MASS SPECTROMETRY</scope>
    <scope>PYROGLUTAMATE FORMATION AT GLN-1</scope>
    <scope>AMIDATION AT VAL-9</scope>
    <source>
        <tissue evidence="4">Abdominal perisympathetic organs</tissue>
    </source>
</reference>
<keyword id="KW-0027">Amidation</keyword>
<keyword id="KW-0903">Direct protein sequencing</keyword>
<keyword id="KW-0527">Neuropeptide</keyword>
<keyword id="KW-0873">Pyrrolidone carboxylic acid</keyword>
<keyword id="KW-0964">Secreted</keyword>
<accession>P86665</accession>
<proteinExistence type="evidence at protein level"/>
<dbReference type="GO" id="GO:0005576">
    <property type="term" value="C:extracellular region"/>
    <property type="evidence" value="ECO:0007669"/>
    <property type="project" value="UniProtKB-SubCell"/>
</dbReference>
<dbReference type="GO" id="GO:0007218">
    <property type="term" value="P:neuropeptide signaling pathway"/>
    <property type="evidence" value="ECO:0007669"/>
    <property type="project" value="UniProtKB-KW"/>
</dbReference>
<dbReference type="InterPro" id="IPR013231">
    <property type="entry name" value="Periviscerokinin"/>
</dbReference>
<dbReference type="Pfam" id="PF08259">
    <property type="entry name" value="Periviscerokin"/>
    <property type="match status" value="1"/>
</dbReference>
<name>PVK1_PHYPD</name>
<sequence>QGLIPFPRV</sequence>
<protein>
    <recommendedName>
        <fullName evidence="5">Periviscerokinin-1</fullName>
    </recommendedName>
</protein>
<feature type="peptide" id="PRO_0000395574" description="Periviscerokinin-1" evidence="4">
    <location>
        <begin position="1"/>
        <end position="9"/>
    </location>
</feature>
<feature type="modified residue" description="Pyrrolidone carboxylic acid; partial" evidence="4">
    <location>
        <position position="1"/>
    </location>
</feature>
<feature type="modified residue" description="Valine amide" evidence="4">
    <location>
        <position position="9"/>
    </location>
</feature>
<feature type="unsure residue" description="L or I" evidence="4">
    <location>
        <position position="3"/>
    </location>
</feature>
<feature type="unsure residue" description="I or L" evidence="4">
    <location>
        <position position="4"/>
    </location>
</feature>
<evidence type="ECO:0000250" key="1">
    <source>
        <dbReference type="UniProtKB" id="P83923"/>
    </source>
</evidence>
<evidence type="ECO:0000250" key="2">
    <source>
        <dbReference type="UniProtKB" id="P84375"/>
    </source>
</evidence>
<evidence type="ECO:0000255" key="3"/>
<evidence type="ECO:0000269" key="4">
    <source>
    </source>
</evidence>
<evidence type="ECO:0000303" key="5">
    <source>
    </source>
</evidence>
<evidence type="ECO:0000305" key="6"/>